<gene>
    <name evidence="1" type="primary">ais</name>
    <name type="ordered locus">SBO_2289</name>
</gene>
<accession>Q31YK5</accession>
<proteinExistence type="inferred from homology"/>
<feature type="signal peptide" evidence="1">
    <location>
        <begin position="1"/>
        <end position="32"/>
    </location>
</feature>
<feature type="chain" id="PRO_0000380587" description="Lipopolysaccharide core heptose(II)-phosphate phosphatase">
    <location>
        <begin position="33"/>
        <end position="212"/>
    </location>
</feature>
<keyword id="KW-0378">Hydrolase</keyword>
<keyword id="KW-0574">Periplasm</keyword>
<keyword id="KW-0732">Signal</keyword>
<sequence>MSIGGVYELAFCRSSLKSKKYFIILLALAAIAGLGTHAAWSSNGLPRIDNKTLARLAQQHPVVVLFRHAERCDRSTNQCLSDKTGITVKGTQDARELGNAFSADIPDFDLYSSNTVRTIQSATWFSAGKKLTVDKRLLQCGNEIYSAIKDLQSKAPDKNIVIFTHNHCLTYIAKNKRDATFKPDYLDGLVMHVEKGKVYLDGEFGNAANLLI</sequence>
<evidence type="ECO:0000255" key="1">
    <source>
        <dbReference type="HAMAP-Rule" id="MF_01868"/>
    </source>
</evidence>
<evidence type="ECO:0000305" key="2"/>
<comment type="function">
    <text evidence="1">Catalyzes the dephosphorylation of heptose(II) of the outer membrane lipopolysaccharide core.</text>
</comment>
<comment type="pathway">
    <text evidence="1">Bacterial outer membrane biogenesis; lipopolysaccharide metabolism.</text>
</comment>
<comment type="subcellular location">
    <subcellularLocation>
        <location evidence="1">Periplasm</location>
    </subcellularLocation>
</comment>
<comment type="similarity">
    <text evidence="1">Belongs to the phosphoglycerate mutase family. Ais subfamily.</text>
</comment>
<comment type="sequence caution" evidence="2">
    <conflict type="erroneous initiation">
        <sequence resource="EMBL-CDS" id="ABB66853"/>
    </conflict>
</comment>
<dbReference type="EC" id="3.1.3.-" evidence="1"/>
<dbReference type="EMBL" id="CP000036">
    <property type="protein sequence ID" value="ABB66853.1"/>
    <property type="status" value="ALT_INIT"/>
    <property type="molecule type" value="Genomic_DNA"/>
</dbReference>
<dbReference type="SMR" id="Q31YK5"/>
<dbReference type="KEGG" id="sbo:SBO_2289"/>
<dbReference type="HOGENOM" id="CLU_106705_1_0_6"/>
<dbReference type="UniPathway" id="UPA00451"/>
<dbReference type="Proteomes" id="UP000007067">
    <property type="component" value="Chromosome"/>
</dbReference>
<dbReference type="GO" id="GO:0042597">
    <property type="term" value="C:periplasmic space"/>
    <property type="evidence" value="ECO:0007669"/>
    <property type="project" value="UniProtKB-SubCell"/>
</dbReference>
<dbReference type="GO" id="GO:0016791">
    <property type="term" value="F:phosphatase activity"/>
    <property type="evidence" value="ECO:0007669"/>
    <property type="project" value="UniProtKB-UniRule"/>
</dbReference>
<dbReference type="GO" id="GO:0008653">
    <property type="term" value="P:lipopolysaccharide metabolic process"/>
    <property type="evidence" value="ECO:0007669"/>
    <property type="project" value="UniProtKB-UniRule"/>
</dbReference>
<dbReference type="CDD" id="cd07040">
    <property type="entry name" value="HP"/>
    <property type="match status" value="1"/>
</dbReference>
<dbReference type="Gene3D" id="3.40.50.1240">
    <property type="entry name" value="Phosphoglycerate mutase-like"/>
    <property type="match status" value="1"/>
</dbReference>
<dbReference type="HAMAP" id="MF_01868">
    <property type="entry name" value="Ais"/>
    <property type="match status" value="1"/>
</dbReference>
<dbReference type="InterPro" id="IPR013078">
    <property type="entry name" value="His_Pase_superF_clade-1"/>
</dbReference>
<dbReference type="InterPro" id="IPR029033">
    <property type="entry name" value="His_PPase_superfam"/>
</dbReference>
<dbReference type="InterPro" id="IPR011310">
    <property type="entry name" value="LipoPS_heptP_Pase"/>
</dbReference>
<dbReference type="NCBIfam" id="NF011945">
    <property type="entry name" value="PRK15416.1"/>
    <property type="match status" value="1"/>
</dbReference>
<dbReference type="Pfam" id="PF00300">
    <property type="entry name" value="His_Phos_1"/>
    <property type="match status" value="1"/>
</dbReference>
<dbReference type="PIRSF" id="PIRSF011416">
    <property type="entry name" value="Ais-TraG-AfrS"/>
    <property type="match status" value="1"/>
</dbReference>
<dbReference type="SUPFAM" id="SSF53254">
    <property type="entry name" value="Phosphoglycerate mutase-like"/>
    <property type="match status" value="1"/>
</dbReference>
<reference key="1">
    <citation type="journal article" date="2005" name="Nucleic Acids Res.">
        <title>Genome dynamics and diversity of Shigella species, the etiologic agents of bacillary dysentery.</title>
        <authorList>
            <person name="Yang F."/>
            <person name="Yang J."/>
            <person name="Zhang X."/>
            <person name="Chen L."/>
            <person name="Jiang Y."/>
            <person name="Yan Y."/>
            <person name="Tang X."/>
            <person name="Wang J."/>
            <person name="Xiong Z."/>
            <person name="Dong J."/>
            <person name="Xue Y."/>
            <person name="Zhu Y."/>
            <person name="Xu X."/>
            <person name="Sun L."/>
            <person name="Chen S."/>
            <person name="Nie H."/>
            <person name="Peng J."/>
            <person name="Xu J."/>
            <person name="Wang Y."/>
            <person name="Yuan Z."/>
            <person name="Wen Y."/>
            <person name="Yao Z."/>
            <person name="Shen Y."/>
            <person name="Qiang B."/>
            <person name="Hou Y."/>
            <person name="Yu J."/>
            <person name="Jin Q."/>
        </authorList>
    </citation>
    <scope>NUCLEOTIDE SEQUENCE [LARGE SCALE GENOMIC DNA]</scope>
    <source>
        <strain>Sb227</strain>
    </source>
</reference>
<protein>
    <recommendedName>
        <fullName evidence="1">Lipopolysaccharide core heptose(II)-phosphate phosphatase</fullName>
        <ecNumber evidence="1">3.1.3.-</ecNumber>
    </recommendedName>
</protein>
<organism>
    <name type="scientific">Shigella boydii serotype 4 (strain Sb227)</name>
    <dbReference type="NCBI Taxonomy" id="300268"/>
    <lineage>
        <taxon>Bacteria</taxon>
        <taxon>Pseudomonadati</taxon>
        <taxon>Pseudomonadota</taxon>
        <taxon>Gammaproteobacteria</taxon>
        <taxon>Enterobacterales</taxon>
        <taxon>Enterobacteriaceae</taxon>
        <taxon>Shigella</taxon>
    </lineage>
</organism>
<name>AIS_SHIBS</name>